<protein>
    <recommendedName>
        <fullName evidence="1">SsrA-binding protein</fullName>
    </recommendedName>
    <alternativeName>
        <fullName evidence="1">Small protein B</fullName>
    </alternativeName>
</protein>
<organism>
    <name type="scientific">Streptococcus pyogenes serotype M5 (strain Manfredo)</name>
    <dbReference type="NCBI Taxonomy" id="160491"/>
    <lineage>
        <taxon>Bacteria</taxon>
        <taxon>Bacillati</taxon>
        <taxon>Bacillota</taxon>
        <taxon>Bacilli</taxon>
        <taxon>Lactobacillales</taxon>
        <taxon>Streptococcaceae</taxon>
        <taxon>Streptococcus</taxon>
    </lineage>
</organism>
<gene>
    <name evidence="1" type="primary">smpB</name>
    <name type="ordered locus">SpyM51455</name>
</gene>
<sequence length="155" mass="17760">MAKGEGHILAQNKKARHDYHIVETVEAGIVLTGTEIKSVRATRIQLKDGFAQIKNGEAWLVNVHIAPFEQGNIWNADPERTRKLLLKKREITHLANELKGTGMTLVPLKVYLKDGFAKVLIGLAKGKHDYDKRETIKRRDQERDIKKQMKHYNAR</sequence>
<name>SSRP_STRPG</name>
<proteinExistence type="inferred from homology"/>
<comment type="function">
    <text evidence="1">Required for rescue of stalled ribosomes mediated by trans-translation. Binds to transfer-messenger RNA (tmRNA), required for stable association of tmRNA with ribosomes. tmRNA and SmpB together mimic tRNA shape, replacing the anticodon stem-loop with SmpB. tmRNA is encoded by the ssrA gene; the 2 termini fold to resemble tRNA(Ala) and it encodes a 'tag peptide', a short internal open reading frame. During trans-translation Ala-aminoacylated tmRNA acts like a tRNA, entering the A-site of stalled ribosomes, displacing the stalled mRNA. The ribosome then switches to translate the ORF on the tmRNA; the nascent peptide is terminated with the 'tag peptide' encoded by the tmRNA and targeted for degradation. The ribosome is freed to recommence translation, which seems to be the essential function of trans-translation.</text>
</comment>
<comment type="subcellular location">
    <subcellularLocation>
        <location evidence="1">Cytoplasm</location>
    </subcellularLocation>
    <text evidence="1">The tmRNA-SmpB complex associates with stalled 70S ribosomes.</text>
</comment>
<comment type="similarity">
    <text evidence="1">Belongs to the SmpB family.</text>
</comment>
<reference key="1">
    <citation type="journal article" date="2007" name="J. Bacteriol.">
        <title>Complete genome of acute rheumatic fever-associated serotype M5 Streptococcus pyogenes strain Manfredo.</title>
        <authorList>
            <person name="Holden M.T.G."/>
            <person name="Scott A."/>
            <person name="Cherevach I."/>
            <person name="Chillingworth T."/>
            <person name="Churcher C."/>
            <person name="Cronin A."/>
            <person name="Dowd L."/>
            <person name="Feltwell T."/>
            <person name="Hamlin N."/>
            <person name="Holroyd S."/>
            <person name="Jagels K."/>
            <person name="Moule S."/>
            <person name="Mungall K."/>
            <person name="Quail M.A."/>
            <person name="Price C."/>
            <person name="Rabbinowitsch E."/>
            <person name="Sharp S."/>
            <person name="Skelton J."/>
            <person name="Whitehead S."/>
            <person name="Barrell B.G."/>
            <person name="Kehoe M."/>
            <person name="Parkhill J."/>
        </authorList>
    </citation>
    <scope>NUCLEOTIDE SEQUENCE [LARGE SCALE GENOMIC DNA]</scope>
    <source>
        <strain>Manfredo</strain>
    </source>
</reference>
<feature type="chain" id="PRO_1000002167" description="SsrA-binding protein">
    <location>
        <begin position="1"/>
        <end position="155"/>
    </location>
</feature>
<keyword id="KW-0963">Cytoplasm</keyword>
<keyword id="KW-0694">RNA-binding</keyword>
<evidence type="ECO:0000255" key="1">
    <source>
        <dbReference type="HAMAP-Rule" id="MF_00023"/>
    </source>
</evidence>
<dbReference type="EMBL" id="AM295007">
    <property type="protein sequence ID" value="CAM30776.1"/>
    <property type="molecule type" value="Genomic_DNA"/>
</dbReference>
<dbReference type="RefSeq" id="WP_011889092.1">
    <property type="nucleotide sequence ID" value="NC_009332.1"/>
</dbReference>
<dbReference type="SMR" id="A2RFZ7"/>
<dbReference type="KEGG" id="spf:SpyM51455"/>
<dbReference type="HOGENOM" id="CLU_108953_0_0_9"/>
<dbReference type="GO" id="GO:0005829">
    <property type="term" value="C:cytosol"/>
    <property type="evidence" value="ECO:0007669"/>
    <property type="project" value="TreeGrafter"/>
</dbReference>
<dbReference type="GO" id="GO:0003723">
    <property type="term" value="F:RNA binding"/>
    <property type="evidence" value="ECO:0007669"/>
    <property type="project" value="UniProtKB-UniRule"/>
</dbReference>
<dbReference type="GO" id="GO:0070929">
    <property type="term" value="P:trans-translation"/>
    <property type="evidence" value="ECO:0007669"/>
    <property type="project" value="UniProtKB-UniRule"/>
</dbReference>
<dbReference type="CDD" id="cd09294">
    <property type="entry name" value="SmpB"/>
    <property type="match status" value="1"/>
</dbReference>
<dbReference type="Gene3D" id="2.40.280.10">
    <property type="match status" value="1"/>
</dbReference>
<dbReference type="HAMAP" id="MF_00023">
    <property type="entry name" value="SmpB"/>
    <property type="match status" value="1"/>
</dbReference>
<dbReference type="InterPro" id="IPR023620">
    <property type="entry name" value="SmpB"/>
</dbReference>
<dbReference type="InterPro" id="IPR000037">
    <property type="entry name" value="SsrA-bd_prot"/>
</dbReference>
<dbReference type="InterPro" id="IPR020081">
    <property type="entry name" value="SsrA-bd_prot_CS"/>
</dbReference>
<dbReference type="NCBIfam" id="NF003843">
    <property type="entry name" value="PRK05422.1"/>
    <property type="match status" value="1"/>
</dbReference>
<dbReference type="NCBIfam" id="TIGR00086">
    <property type="entry name" value="smpB"/>
    <property type="match status" value="1"/>
</dbReference>
<dbReference type="PANTHER" id="PTHR30308:SF2">
    <property type="entry name" value="SSRA-BINDING PROTEIN"/>
    <property type="match status" value="1"/>
</dbReference>
<dbReference type="PANTHER" id="PTHR30308">
    <property type="entry name" value="TMRNA-BINDING COMPONENT OF TRANS-TRANSLATION TAGGING COMPLEX"/>
    <property type="match status" value="1"/>
</dbReference>
<dbReference type="Pfam" id="PF01668">
    <property type="entry name" value="SmpB"/>
    <property type="match status" value="1"/>
</dbReference>
<dbReference type="SUPFAM" id="SSF74982">
    <property type="entry name" value="Small protein B (SmpB)"/>
    <property type="match status" value="1"/>
</dbReference>
<dbReference type="PROSITE" id="PS01317">
    <property type="entry name" value="SSRP"/>
    <property type="match status" value="1"/>
</dbReference>
<accession>A2RFZ7</accession>